<gene>
    <name type="primary">ppr6</name>
    <name type="ORF">SPCC11E10.04</name>
</gene>
<name>PPR6_SCHPO</name>
<keyword id="KW-0496">Mitochondrion</keyword>
<keyword id="KW-1185">Reference proteome</keyword>
<keyword id="KW-0677">Repeat</keyword>
<keyword id="KW-0809">Transit peptide</keyword>
<sequence length="443" mass="51032">MRILGSLPNNIRKCTFKLILQKRYSHTDILKELLYDISDSQKFIPSASPIASNLLRVSSYGKLSSLFIEYSKARSKKEFDQLRTSDFQSILRSVVCPKNGKNIRHRDRDLVSLQIKLILQDADRLGIQFNIVDYTHILRVAMYTGNKHILEYIVARVKEKRIRPSVDYFNAILGVIGGNRWSLSKFQSPAFRGSPVTEPVSGKMLDMIEVDFPNYDLVPNSTTYDYLMVGLSRDGKIREIYDLIDTVWGINENSSSKKVDCGNVTFPTHHTVFSIISALGYLGDVSSAVSLSRKLTSVYKINFPELAWRYIIYWSIASLQFRAPAGHARIKNIELFIRLYSQMYRHCVPIIEIYDTSIKFYMKHGRFGLLEKVCESWTKQFLGSLEKQNNEVKKKHLQLLEKQISKLMRYAETERPHDTKRVSVKWSNVLNQIHSSVGDPAKP</sequence>
<protein>
    <recommendedName>
        <fullName>Pentatricopeptide repeat-containing protein 6, mitochondrial</fullName>
    </recommendedName>
</protein>
<proteinExistence type="predicted"/>
<evidence type="ECO:0000255" key="1"/>
<evidence type="ECO:0000269" key="2">
    <source>
    </source>
</evidence>
<evidence type="ECO:0000269" key="3">
    <source>
    </source>
</evidence>
<dbReference type="EMBL" id="CU329672">
    <property type="protein sequence ID" value="CAB57846.1"/>
    <property type="molecule type" value="Genomic_DNA"/>
</dbReference>
<dbReference type="PIR" id="T40855">
    <property type="entry name" value="T40855"/>
</dbReference>
<dbReference type="RefSeq" id="NP_588200.1">
    <property type="nucleotide sequence ID" value="NM_001023190.2"/>
</dbReference>
<dbReference type="STRING" id="284812.Q9USP3"/>
<dbReference type="PaxDb" id="4896-SPCC11E10.04.1"/>
<dbReference type="EnsemblFungi" id="SPCC11E10.04.1">
    <property type="protein sequence ID" value="SPCC11E10.04.1:pep"/>
    <property type="gene ID" value="SPCC11E10.04"/>
</dbReference>
<dbReference type="GeneID" id="2539022"/>
<dbReference type="KEGG" id="spo:2539022"/>
<dbReference type="PomBase" id="SPCC11E10.04">
    <property type="gene designation" value="ppr6"/>
</dbReference>
<dbReference type="VEuPathDB" id="FungiDB:SPCC11E10.04"/>
<dbReference type="HOGENOM" id="CLU_628760_0_0_1"/>
<dbReference type="InParanoid" id="Q9USP3"/>
<dbReference type="OMA" id="NIGDFTH"/>
<dbReference type="PRO" id="PR:Q9USP3"/>
<dbReference type="Proteomes" id="UP000002485">
    <property type="component" value="Chromosome III"/>
</dbReference>
<dbReference type="GO" id="GO:0005759">
    <property type="term" value="C:mitochondrial matrix"/>
    <property type="evidence" value="ECO:0000305"/>
    <property type="project" value="PomBase"/>
</dbReference>
<dbReference type="GO" id="GO:0005739">
    <property type="term" value="C:mitochondrion"/>
    <property type="evidence" value="ECO:0000314"/>
    <property type="project" value="PomBase"/>
</dbReference>
<dbReference type="GO" id="GO:0003729">
    <property type="term" value="F:mRNA binding"/>
    <property type="evidence" value="ECO:0000318"/>
    <property type="project" value="GO_Central"/>
</dbReference>
<dbReference type="GO" id="GO:0140053">
    <property type="term" value="P:mitochondrial gene expression"/>
    <property type="evidence" value="ECO:0000315"/>
    <property type="project" value="PomBase"/>
</dbReference>
<dbReference type="Gene3D" id="1.25.40.10">
    <property type="entry name" value="Tetratricopeptide repeat domain"/>
    <property type="match status" value="1"/>
</dbReference>
<dbReference type="InterPro" id="IPR024319">
    <property type="entry name" value="ATPase_expression_mit"/>
</dbReference>
<dbReference type="InterPro" id="IPR002885">
    <property type="entry name" value="Pentatricopeptide_rpt"/>
</dbReference>
<dbReference type="InterPro" id="IPR011990">
    <property type="entry name" value="TPR-like_helical_dom_sf"/>
</dbReference>
<dbReference type="Pfam" id="PF12921">
    <property type="entry name" value="ATP13"/>
    <property type="match status" value="1"/>
</dbReference>
<dbReference type="Pfam" id="PF13812">
    <property type="entry name" value="PPR_3"/>
    <property type="match status" value="1"/>
</dbReference>
<reference key="1">
    <citation type="journal article" date="2002" name="Nature">
        <title>The genome sequence of Schizosaccharomyces pombe.</title>
        <authorList>
            <person name="Wood V."/>
            <person name="Gwilliam R."/>
            <person name="Rajandream M.A."/>
            <person name="Lyne M.H."/>
            <person name="Lyne R."/>
            <person name="Stewart A."/>
            <person name="Sgouros J.G."/>
            <person name="Peat N."/>
            <person name="Hayles J."/>
            <person name="Baker S.G."/>
            <person name="Basham D."/>
            <person name="Bowman S."/>
            <person name="Brooks K."/>
            <person name="Brown D."/>
            <person name="Brown S."/>
            <person name="Chillingworth T."/>
            <person name="Churcher C.M."/>
            <person name="Collins M."/>
            <person name="Connor R."/>
            <person name="Cronin A."/>
            <person name="Davis P."/>
            <person name="Feltwell T."/>
            <person name="Fraser A."/>
            <person name="Gentles S."/>
            <person name="Goble A."/>
            <person name="Hamlin N."/>
            <person name="Harris D.E."/>
            <person name="Hidalgo J."/>
            <person name="Hodgson G."/>
            <person name="Holroyd S."/>
            <person name="Hornsby T."/>
            <person name="Howarth S."/>
            <person name="Huckle E.J."/>
            <person name="Hunt S."/>
            <person name="Jagels K."/>
            <person name="James K.D."/>
            <person name="Jones L."/>
            <person name="Jones M."/>
            <person name="Leather S."/>
            <person name="McDonald S."/>
            <person name="McLean J."/>
            <person name="Mooney P."/>
            <person name="Moule S."/>
            <person name="Mungall K.L."/>
            <person name="Murphy L.D."/>
            <person name="Niblett D."/>
            <person name="Odell C."/>
            <person name="Oliver K."/>
            <person name="O'Neil S."/>
            <person name="Pearson D."/>
            <person name="Quail M.A."/>
            <person name="Rabbinowitsch E."/>
            <person name="Rutherford K.M."/>
            <person name="Rutter S."/>
            <person name="Saunders D."/>
            <person name="Seeger K."/>
            <person name="Sharp S."/>
            <person name="Skelton J."/>
            <person name="Simmonds M.N."/>
            <person name="Squares R."/>
            <person name="Squares S."/>
            <person name="Stevens K."/>
            <person name="Taylor K."/>
            <person name="Taylor R.G."/>
            <person name="Tivey A."/>
            <person name="Walsh S.V."/>
            <person name="Warren T."/>
            <person name="Whitehead S."/>
            <person name="Woodward J.R."/>
            <person name="Volckaert G."/>
            <person name="Aert R."/>
            <person name="Robben J."/>
            <person name="Grymonprez B."/>
            <person name="Weltjens I."/>
            <person name="Vanstreels E."/>
            <person name="Rieger M."/>
            <person name="Schaefer M."/>
            <person name="Mueller-Auer S."/>
            <person name="Gabel C."/>
            <person name="Fuchs M."/>
            <person name="Duesterhoeft A."/>
            <person name="Fritzc C."/>
            <person name="Holzer E."/>
            <person name="Moestl D."/>
            <person name="Hilbert H."/>
            <person name="Borzym K."/>
            <person name="Langer I."/>
            <person name="Beck A."/>
            <person name="Lehrach H."/>
            <person name="Reinhardt R."/>
            <person name="Pohl T.M."/>
            <person name="Eger P."/>
            <person name="Zimmermann W."/>
            <person name="Wedler H."/>
            <person name="Wambutt R."/>
            <person name="Purnelle B."/>
            <person name="Goffeau A."/>
            <person name="Cadieu E."/>
            <person name="Dreano S."/>
            <person name="Gloux S."/>
            <person name="Lelaure V."/>
            <person name="Mottier S."/>
            <person name="Galibert F."/>
            <person name="Aves S.J."/>
            <person name="Xiang Z."/>
            <person name="Hunt C."/>
            <person name="Moore K."/>
            <person name="Hurst S.M."/>
            <person name="Lucas M."/>
            <person name="Rochet M."/>
            <person name="Gaillardin C."/>
            <person name="Tallada V.A."/>
            <person name="Garzon A."/>
            <person name="Thode G."/>
            <person name="Daga R.R."/>
            <person name="Cruzado L."/>
            <person name="Jimenez J."/>
            <person name="Sanchez M."/>
            <person name="del Rey F."/>
            <person name="Benito J."/>
            <person name="Dominguez A."/>
            <person name="Revuelta J.L."/>
            <person name="Moreno S."/>
            <person name="Armstrong J."/>
            <person name="Forsburg S.L."/>
            <person name="Cerutti L."/>
            <person name="Lowe T."/>
            <person name="McCombie W.R."/>
            <person name="Paulsen I."/>
            <person name="Potashkin J."/>
            <person name="Shpakovski G.V."/>
            <person name="Ussery D."/>
            <person name="Barrell B.G."/>
            <person name="Nurse P."/>
        </authorList>
    </citation>
    <scope>NUCLEOTIDE SEQUENCE [LARGE SCALE GENOMIC DNA]</scope>
    <source>
        <strain>972 / ATCC 24843</strain>
    </source>
</reference>
<reference key="2">
    <citation type="journal article" date="2006" name="Nat. Biotechnol.">
        <title>ORFeome cloning and global analysis of protein localization in the fission yeast Schizosaccharomyces pombe.</title>
        <authorList>
            <person name="Matsuyama A."/>
            <person name="Arai R."/>
            <person name="Yashiroda Y."/>
            <person name="Shirai A."/>
            <person name="Kamata A."/>
            <person name="Sekido S."/>
            <person name="Kobayashi Y."/>
            <person name="Hashimoto A."/>
            <person name="Hamamoto M."/>
            <person name="Hiraoka Y."/>
            <person name="Horinouchi S."/>
            <person name="Yoshida M."/>
        </authorList>
    </citation>
    <scope>SUBCELLULAR LOCATION [LARGE SCALE ANALYSIS]</scope>
</reference>
<reference key="3">
    <citation type="journal article" date="2011" name="Nucleic Acids Res.">
        <title>A genome wide study in fission yeast reveals nine PPR proteins that regulate mitochondrial gene expression.</title>
        <authorList>
            <person name="Kuhl I."/>
            <person name="Dujeancourt L."/>
            <person name="Gaisne M."/>
            <person name="Herbert C.J."/>
            <person name="Bonnefoy N."/>
        </authorList>
    </citation>
    <scope>DOMAIN</scope>
    <scope>SUBCELLULAR LOCATION</scope>
    <scope>DISRUPTION PHENOTYPE</scope>
    <scope>FUNCTION</scope>
</reference>
<comment type="function">
    <text evidence="3">Mitochondrial RNA-binding protein required for the stability of the atp9 mRNA.</text>
</comment>
<comment type="subcellular location">
    <subcellularLocation>
        <location evidence="2 3">Mitochondrion</location>
    </subcellularLocation>
</comment>
<comment type="disruption phenotype">
    <text evidence="3">Impairs growth on galactose, leads to low viability on glucose containing G418, and leads to strongly sensitivity to antimycin A on glucose medium.</text>
</comment>
<organism>
    <name type="scientific">Schizosaccharomyces pombe (strain 972 / ATCC 24843)</name>
    <name type="common">Fission yeast</name>
    <dbReference type="NCBI Taxonomy" id="284812"/>
    <lineage>
        <taxon>Eukaryota</taxon>
        <taxon>Fungi</taxon>
        <taxon>Dikarya</taxon>
        <taxon>Ascomycota</taxon>
        <taxon>Taphrinomycotina</taxon>
        <taxon>Schizosaccharomycetes</taxon>
        <taxon>Schizosaccharomycetales</taxon>
        <taxon>Schizosaccharomycetaceae</taxon>
        <taxon>Schizosaccharomyces</taxon>
    </lineage>
</organism>
<feature type="transit peptide" description="Mitochondrion" evidence="1">
    <location>
        <begin position="1"/>
        <end position="13"/>
    </location>
</feature>
<feature type="chain" id="PRO_0000353137" description="Pentatricopeptide repeat-containing protein 6, mitochondrial">
    <location>
        <begin position="14"/>
        <end position="443"/>
    </location>
</feature>
<feature type="repeat" description="PPR 1">
    <location>
        <begin position="130"/>
        <end position="164"/>
    </location>
</feature>
<feature type="repeat" description="PPR 2">
    <location>
        <begin position="220"/>
        <end position="254"/>
    </location>
</feature>
<accession>Q9USP3</accession>